<gene>
    <name type="primary">vhcB</name>
</gene>
<accession>Q50849</accession>
<sequence length="157" mass="17246">MNNLNSENMCNCCNSANSCGGTNGISWDREKCEYCGPCAIKCPNDAIMVVNPKGLELPSRAKTERANEFKMCDLCGTCVSACPTEALQMGKIVHNEKEYDRIEFTPSLCDSCGACVEICPQNVLKLNEEYKLKGFCVMCLKCIDACDKTNQNALSLK</sequence>
<feature type="chain" id="PRO_0000159145" description="Polyferredoxin protein VhcB">
    <location>
        <begin position="1"/>
        <end position="157"/>
    </location>
</feature>
<feature type="domain" description="4Fe-4S ferredoxin-type 1" evidence="2">
    <location>
        <begin position="23"/>
        <end position="52"/>
    </location>
</feature>
<feature type="domain" description="4Fe-4S ferredoxin-type 2" evidence="2">
    <location>
        <begin position="62"/>
        <end position="92"/>
    </location>
</feature>
<feature type="domain" description="4Fe-4S ferredoxin-type 3" evidence="2">
    <location>
        <begin position="100"/>
        <end position="129"/>
    </location>
</feature>
<feature type="binding site" evidence="1">
    <location>
        <position position="32"/>
    </location>
    <ligand>
        <name>[4Fe-4S] cluster</name>
        <dbReference type="ChEBI" id="CHEBI:49883"/>
    </ligand>
</feature>
<feature type="binding site" evidence="1">
    <location>
        <position position="35"/>
    </location>
    <ligand>
        <name>[4Fe-4S] cluster</name>
        <dbReference type="ChEBI" id="CHEBI:49883"/>
    </ligand>
</feature>
<feature type="binding site" evidence="1">
    <location>
        <position position="38"/>
    </location>
    <ligand>
        <name>[4Fe-4S] cluster</name>
        <dbReference type="ChEBI" id="CHEBI:49883"/>
    </ligand>
</feature>
<feature type="binding site" evidence="1">
    <location>
        <position position="42"/>
    </location>
    <ligand>
        <name>[4Fe-4S] cluster</name>
        <dbReference type="ChEBI" id="CHEBI:49883"/>
    </ligand>
</feature>
<feature type="binding site" evidence="1">
    <location>
        <position position="72"/>
    </location>
    <ligand>
        <name>[4Fe-4S] cluster</name>
        <dbReference type="ChEBI" id="CHEBI:49883"/>
    </ligand>
</feature>
<feature type="binding site" evidence="1">
    <location>
        <position position="75"/>
    </location>
    <ligand>
        <name>[4Fe-4S] cluster</name>
        <dbReference type="ChEBI" id="CHEBI:49883"/>
    </ligand>
</feature>
<feature type="binding site" evidence="1">
    <location>
        <position position="78"/>
    </location>
    <ligand>
        <name>[4Fe-4S] cluster</name>
        <dbReference type="ChEBI" id="CHEBI:49883"/>
    </ligand>
</feature>
<feature type="binding site" evidence="1">
    <location>
        <position position="82"/>
    </location>
    <ligand>
        <name>[4Fe-4S] cluster</name>
        <dbReference type="ChEBI" id="CHEBI:49883"/>
    </ligand>
</feature>
<feature type="binding site" evidence="1">
    <location>
        <position position="109"/>
    </location>
    <ligand>
        <name>[4Fe-4S] cluster</name>
        <dbReference type="ChEBI" id="CHEBI:49883"/>
    </ligand>
</feature>
<feature type="binding site" evidence="1">
    <location>
        <position position="112"/>
    </location>
    <ligand>
        <name>[4Fe-4S] cluster</name>
        <dbReference type="ChEBI" id="CHEBI:49883"/>
    </ligand>
</feature>
<feature type="binding site" evidence="1">
    <location>
        <position position="115"/>
    </location>
    <ligand>
        <name>[4Fe-4S] cluster</name>
        <dbReference type="ChEBI" id="CHEBI:49883"/>
    </ligand>
</feature>
<feature type="binding site" evidence="1">
    <location>
        <position position="119"/>
    </location>
    <ligand>
        <name>[4Fe-4S] cluster</name>
        <dbReference type="ChEBI" id="CHEBI:49883"/>
    </ligand>
</feature>
<feature type="binding site" evidence="1">
    <location>
        <position position="136"/>
    </location>
    <ligand>
        <name>[4Fe-4S] cluster</name>
        <dbReference type="ChEBI" id="CHEBI:49883"/>
    </ligand>
</feature>
<feature type="binding site" evidence="1">
    <location>
        <position position="139"/>
    </location>
    <ligand>
        <name>[4Fe-4S] cluster</name>
        <dbReference type="ChEBI" id="CHEBI:49883"/>
    </ligand>
</feature>
<feature type="binding site" evidence="1">
    <location>
        <position position="142"/>
    </location>
    <ligand>
        <name>[4Fe-4S] cluster</name>
        <dbReference type="ChEBI" id="CHEBI:49883"/>
    </ligand>
</feature>
<feature type="binding site" evidence="1">
    <location>
        <position position="146"/>
    </location>
    <ligand>
        <name>[4Fe-4S] cluster</name>
        <dbReference type="ChEBI" id="CHEBI:49883"/>
    </ligand>
</feature>
<keyword id="KW-0004">4Fe-4S</keyword>
<keyword id="KW-0249">Electron transport</keyword>
<keyword id="KW-0408">Iron</keyword>
<keyword id="KW-0411">Iron-sulfur</keyword>
<keyword id="KW-0479">Metal-binding</keyword>
<keyword id="KW-0677">Repeat</keyword>
<keyword id="KW-0813">Transport</keyword>
<evidence type="ECO:0000255" key="1"/>
<evidence type="ECO:0000255" key="2">
    <source>
        <dbReference type="PROSITE-ProRule" id="PRU00711"/>
    </source>
</evidence>
<evidence type="ECO:0000305" key="3"/>
<reference key="1">
    <citation type="journal article" date="1992" name="Mol. Gen. Genet.">
        <title>Methanococcus voltae harbors four gene clusters potentially encoding two [NiFe] and two [NiFeSe] hydrogenases, each of the cofactor F420-reducing or F420-non-reducing types.</title>
        <authorList>
            <person name="Halboth S."/>
            <person name="Klein A."/>
        </authorList>
    </citation>
    <scope>NUCLEOTIDE SEQUENCE [GENOMIC DNA]</scope>
    <source>
        <strain>ATCC 33273 / DSM 1537 / NBRC 100457 / OCM 70 / PS</strain>
    </source>
</reference>
<name>VHCB_METVO</name>
<dbReference type="EMBL" id="X61203">
    <property type="protein sequence ID" value="CAA43507.1"/>
    <property type="molecule type" value="Genomic_DNA"/>
</dbReference>
<dbReference type="PIR" id="S16728">
    <property type="entry name" value="S16728"/>
</dbReference>
<dbReference type="GO" id="GO:0051539">
    <property type="term" value="F:4 iron, 4 sulfur cluster binding"/>
    <property type="evidence" value="ECO:0007669"/>
    <property type="project" value="UniProtKB-KW"/>
</dbReference>
<dbReference type="GO" id="GO:0046872">
    <property type="term" value="F:metal ion binding"/>
    <property type="evidence" value="ECO:0007669"/>
    <property type="project" value="UniProtKB-KW"/>
</dbReference>
<dbReference type="GO" id="GO:0016491">
    <property type="term" value="F:oxidoreductase activity"/>
    <property type="evidence" value="ECO:0007669"/>
    <property type="project" value="UniProtKB-ARBA"/>
</dbReference>
<dbReference type="CDD" id="cd10549">
    <property type="entry name" value="MtMvhB_like"/>
    <property type="match status" value="1"/>
</dbReference>
<dbReference type="Gene3D" id="3.30.70.20">
    <property type="match status" value="1"/>
</dbReference>
<dbReference type="Gene3D" id="3.30.70.3270">
    <property type="match status" value="1"/>
</dbReference>
<dbReference type="InterPro" id="IPR017896">
    <property type="entry name" value="4Fe4S_Fe-S-bd"/>
</dbReference>
<dbReference type="InterPro" id="IPR017900">
    <property type="entry name" value="4Fe4S_Fe_S_CS"/>
</dbReference>
<dbReference type="InterPro" id="IPR052977">
    <property type="entry name" value="Polyferredoxin-like_ET"/>
</dbReference>
<dbReference type="PANTHER" id="PTHR43193">
    <property type="match status" value="1"/>
</dbReference>
<dbReference type="PANTHER" id="PTHR43193:SF2">
    <property type="entry name" value="POLYFERREDOXIN PROTEIN FWDF"/>
    <property type="match status" value="1"/>
</dbReference>
<dbReference type="Pfam" id="PF00037">
    <property type="entry name" value="Fer4"/>
    <property type="match status" value="1"/>
</dbReference>
<dbReference type="Pfam" id="PF12838">
    <property type="entry name" value="Fer4_7"/>
    <property type="match status" value="1"/>
</dbReference>
<dbReference type="SUPFAM" id="SSF54862">
    <property type="entry name" value="4Fe-4S ferredoxins"/>
    <property type="match status" value="1"/>
</dbReference>
<dbReference type="PROSITE" id="PS00198">
    <property type="entry name" value="4FE4S_FER_1"/>
    <property type="match status" value="3"/>
</dbReference>
<dbReference type="PROSITE" id="PS51379">
    <property type="entry name" value="4FE4S_FER_2"/>
    <property type="match status" value="3"/>
</dbReference>
<comment type="cofactor">
    <cofactor evidence="3">
        <name>[4Fe-4S] cluster</name>
        <dbReference type="ChEBI" id="CHEBI:49883"/>
    </cofactor>
    <text evidence="3">Binds 4 [4Fe-4S] clusters.</text>
</comment>
<organism>
    <name type="scientific">Methanococcus voltae</name>
    <dbReference type="NCBI Taxonomy" id="2188"/>
    <lineage>
        <taxon>Archaea</taxon>
        <taxon>Methanobacteriati</taxon>
        <taxon>Methanobacteriota</taxon>
        <taxon>Methanomada group</taxon>
        <taxon>Methanococci</taxon>
        <taxon>Methanococcales</taxon>
        <taxon>Methanococcaceae</taxon>
        <taxon>Methanococcus</taxon>
    </lineage>
</organism>
<protein>
    <recommendedName>
        <fullName>Polyferredoxin protein VhcB</fullName>
    </recommendedName>
</protein>
<proteinExistence type="predicted"/>